<reference key="1">
    <citation type="submission" date="2006-01" db="EMBL/GenBank/DDBJ databases">
        <authorList>
            <consortium name="NIH - Mammalian Gene Collection (MGC) project"/>
        </authorList>
    </citation>
    <scope>NUCLEOTIDE SEQUENCE [LARGE SCALE MRNA]</scope>
    <source>
        <strain>Hereford</strain>
        <tissue>Testis</tissue>
    </source>
</reference>
<proteinExistence type="evidence at transcript level"/>
<sequence>MALWRAYQRALTAHPWKVQVLTAGSLMGLGDVISQQLVERRGLQAHQAGRTLTMASLGCGFVGPVVGGWYRVLDRLIPGTTKVDALKKMLLDQGGFAPCFLGCFLPLVGTLNGLSAQDNWAKLQRDFPDALITNYYLWPAVQLANFYLVPLHYRLAVVQCVAVIWNSYLSWKAHRL</sequence>
<evidence type="ECO:0000250" key="1">
    <source>
        <dbReference type="UniProtKB" id="P19258"/>
    </source>
</evidence>
<evidence type="ECO:0000250" key="2">
    <source>
        <dbReference type="UniProtKB" id="P39210"/>
    </source>
</evidence>
<evidence type="ECO:0000255" key="3"/>
<evidence type="ECO:0000305" key="4"/>
<evidence type="ECO:0000312" key="5">
    <source>
        <dbReference type="Proteomes" id="UP000009136"/>
    </source>
</evidence>
<name>MPV17_BOVIN</name>
<gene>
    <name evidence="2" type="primary">MPV17</name>
</gene>
<organism evidence="5">
    <name type="scientific">Bos taurus</name>
    <name type="common">Bovine</name>
    <dbReference type="NCBI Taxonomy" id="9913"/>
    <lineage>
        <taxon>Eukaryota</taxon>
        <taxon>Metazoa</taxon>
        <taxon>Chordata</taxon>
        <taxon>Craniata</taxon>
        <taxon>Vertebrata</taxon>
        <taxon>Euteleostomi</taxon>
        <taxon>Mammalia</taxon>
        <taxon>Eutheria</taxon>
        <taxon>Laurasiatheria</taxon>
        <taxon>Artiodactyla</taxon>
        <taxon>Ruminantia</taxon>
        <taxon>Pecora</taxon>
        <taxon>Bovidae</taxon>
        <taxon>Bovinae</taxon>
        <taxon>Bos</taxon>
    </lineage>
</organism>
<dbReference type="EMBL" id="BC112572">
    <property type="protein sequence ID" value="AAI12573.1"/>
    <property type="molecule type" value="mRNA"/>
</dbReference>
<dbReference type="RefSeq" id="NP_001039394.1">
    <property type="nucleotide sequence ID" value="NM_001045929.2"/>
</dbReference>
<dbReference type="RefSeq" id="XP_005212995.1">
    <property type="nucleotide sequence ID" value="XM_005212938.5"/>
</dbReference>
<dbReference type="FunCoup" id="Q2KIN6">
    <property type="interactions" value="1975"/>
</dbReference>
<dbReference type="STRING" id="9913.ENSBTAP00000024316"/>
<dbReference type="PaxDb" id="9913-ENSBTAP00000024316"/>
<dbReference type="GeneID" id="505763"/>
<dbReference type="KEGG" id="bta:505763"/>
<dbReference type="CTD" id="4358"/>
<dbReference type="VEuPathDB" id="HostDB:ENSBTAG00000018269"/>
<dbReference type="eggNOG" id="KOG1944">
    <property type="taxonomic scope" value="Eukaryota"/>
</dbReference>
<dbReference type="HOGENOM" id="CLU_049109_8_3_1"/>
<dbReference type="InParanoid" id="Q2KIN6"/>
<dbReference type="OMA" id="WYQSKLA"/>
<dbReference type="OrthoDB" id="430207at2759"/>
<dbReference type="TreeFam" id="TF324070"/>
<dbReference type="Reactome" id="R-BTA-9033241">
    <property type="pathway name" value="Peroxisomal protein import"/>
</dbReference>
<dbReference type="Proteomes" id="UP000009136">
    <property type="component" value="Chromosome 11"/>
</dbReference>
<dbReference type="Bgee" id="ENSBTAG00000018269">
    <property type="expression patterns" value="Expressed in caput epididymis and 102 other cell types or tissues"/>
</dbReference>
<dbReference type="GO" id="GO:0005737">
    <property type="term" value="C:cytoplasm"/>
    <property type="evidence" value="ECO:0000318"/>
    <property type="project" value="GO_Central"/>
</dbReference>
<dbReference type="GO" id="GO:0005743">
    <property type="term" value="C:mitochondrial inner membrane"/>
    <property type="evidence" value="ECO:0007669"/>
    <property type="project" value="UniProtKB-SubCell"/>
</dbReference>
<dbReference type="GO" id="GO:0005739">
    <property type="term" value="C:mitochondrion"/>
    <property type="evidence" value="ECO:0000318"/>
    <property type="project" value="GO_Central"/>
</dbReference>
<dbReference type="GO" id="GO:0015267">
    <property type="term" value="F:channel activity"/>
    <property type="evidence" value="ECO:0000250"/>
    <property type="project" value="UniProtKB"/>
</dbReference>
<dbReference type="GO" id="GO:1901858">
    <property type="term" value="P:regulation of mitochondrial DNA metabolic process"/>
    <property type="evidence" value="ECO:0000250"/>
    <property type="project" value="UniProtKB"/>
</dbReference>
<dbReference type="InterPro" id="IPR007248">
    <property type="entry name" value="Mpv17_PMP22"/>
</dbReference>
<dbReference type="PANTHER" id="PTHR11266">
    <property type="entry name" value="PEROXISOMAL MEMBRANE PROTEIN 2, PXMP2 MPV17"/>
    <property type="match status" value="1"/>
</dbReference>
<dbReference type="PANTHER" id="PTHR11266:SF17">
    <property type="entry name" value="PROTEIN MPV17"/>
    <property type="match status" value="1"/>
</dbReference>
<dbReference type="Pfam" id="PF04117">
    <property type="entry name" value="Mpv17_PMP22"/>
    <property type="match status" value="1"/>
</dbReference>
<feature type="chain" id="PRO_0000234398" description="Mitochondrial inner membrane protein Mpv17">
    <location>
        <begin position="1"/>
        <end position="176"/>
    </location>
</feature>
<feature type="transmembrane region" description="Helical" evidence="3">
    <location>
        <begin position="18"/>
        <end position="38"/>
    </location>
</feature>
<feature type="transmembrane region" description="Helical" evidence="3">
    <location>
        <begin position="53"/>
        <end position="73"/>
    </location>
</feature>
<feature type="transmembrane region" description="Helical" evidence="3">
    <location>
        <begin position="94"/>
        <end position="114"/>
    </location>
</feature>
<feature type="transmembrane region" description="Helical" evidence="3">
    <location>
        <begin position="131"/>
        <end position="151"/>
    </location>
</feature>
<feature type="site" description="Determines ion selectivity" evidence="2">
    <location>
        <position position="92"/>
    </location>
</feature>
<protein>
    <recommendedName>
        <fullName evidence="2">Mitochondrial inner membrane protein Mpv17</fullName>
    </recommendedName>
    <alternativeName>
        <fullName>Protein Mpv17</fullName>
    </alternativeName>
</protein>
<comment type="function">
    <text evidence="1 2">Non-selective channel that modulates the membrane potential under normal conditions and oxidative stress, and is involved in mitochondrial homeostasis. Involved in mitochondrial deoxynucleoside triphosphates (dNTP) pool homeostasis and mitochondrial DNA (mtDNA) maintenance (By similarity). May be involved in the regulation of reactive oxygen species metabolism and the control of oxidative phosphorylation (By similarity).</text>
</comment>
<comment type="subcellular location">
    <subcellularLocation>
        <location evidence="2">Mitochondrion inner membrane</location>
        <topology evidence="2">Multi-pass membrane protein</topology>
    </subcellularLocation>
</comment>
<comment type="similarity">
    <text evidence="4">Belongs to the peroxisomal membrane protein PXMP2/4 family.</text>
</comment>
<accession>Q2KIN6</accession>
<keyword id="KW-0472">Membrane</keyword>
<keyword id="KW-0496">Mitochondrion</keyword>
<keyword id="KW-0999">Mitochondrion inner membrane</keyword>
<keyword id="KW-1185">Reference proteome</keyword>
<keyword id="KW-0812">Transmembrane</keyword>
<keyword id="KW-1133">Transmembrane helix</keyword>